<feature type="signal peptide" evidence="3 4 5 6">
    <location>
        <begin position="1"/>
        <end position="19"/>
    </location>
</feature>
<feature type="chain" id="PRO_0000059759" description="Immunoglobulin kappa variable 2D-28" evidence="3 5 6">
    <location>
        <begin position="20"/>
        <end position="120"/>
    </location>
</feature>
<feature type="domain" description="Ig-like" evidence="2">
    <location>
        <begin position="20"/>
        <end position="120" status="greater than"/>
    </location>
</feature>
<feature type="region of interest" description="Framework-1" evidence="1">
    <location>
        <begin position="21"/>
        <end position="43"/>
    </location>
</feature>
<feature type="region of interest" description="Complementarity-determining-1" evidence="1">
    <location>
        <begin position="44"/>
        <end position="59"/>
    </location>
</feature>
<feature type="region of interest" description="Framework-2" evidence="1">
    <location>
        <begin position="60"/>
        <end position="74"/>
    </location>
</feature>
<feature type="region of interest" description="Complementarity-determining-2" evidence="1">
    <location>
        <begin position="75"/>
        <end position="81"/>
    </location>
</feature>
<feature type="region of interest" description="Framework-3" evidence="1">
    <location>
        <begin position="82"/>
        <end position="113"/>
    </location>
</feature>
<feature type="region of interest" description="Complementarity-determining-3" evidence="1">
    <location>
        <begin position="114"/>
        <end position="120" status="greater than"/>
    </location>
</feature>
<feature type="disulfide bond" evidence="2">
    <location>
        <begin position="43"/>
        <end position="113"/>
    </location>
</feature>
<feature type="sequence conflict" description="In Ref. 5; AA sequence." evidence="13" ref="5">
    <original>I</original>
    <variation>V</variation>
    <location>
        <position position="22"/>
    </location>
</feature>
<feature type="sequence conflict" description="In Ref. 3; AA sequence." evidence="13" ref="3">
    <original>M</original>
    <variation>L</variation>
    <location>
        <position position="24"/>
    </location>
</feature>
<feature type="sequence conflict" description="In Ref. 5; AA sequence." evidence="13" ref="5">
    <original>S</original>
    <variation>F</variation>
    <location>
        <position position="30"/>
    </location>
</feature>
<feature type="sequence conflict" description="In Ref. 5; AA sequence." evidence="13" ref="5">
    <original>P</original>
    <variation>L</variation>
    <location>
        <position position="35"/>
    </location>
</feature>
<feature type="sequence conflict" description="In Ref. 5; AA sequence." evidence="13" ref="5">
    <original>S</original>
    <variation>Q</variation>
    <location>
        <position position="42"/>
    </location>
</feature>
<feature type="sequence conflict" description="In Ref. 3; AA sequence." evidence="13" ref="3">
    <original>S</original>
    <variation>N</variation>
    <location>
        <position position="48"/>
    </location>
</feature>
<feature type="sequence conflict" description="In Ref. 5; AA sequence." evidence="13" ref="5">
    <original>LHS</original>
    <variation>VYR</variation>
    <location>
        <begin position="50"/>
        <end position="52"/>
    </location>
</feature>
<feature type="sequence conflict" description="In Ref. 3; AA sequence." evidence="13" ref="3">
    <original>H</original>
    <variation>Z</variation>
    <location>
        <position position="51"/>
    </location>
</feature>
<feature type="sequence conflict" description="In Ref. 4; AA sequence." evidence="13" ref="4">
    <original>NGYN</original>
    <variation>DGFD</variation>
    <location>
        <begin position="53"/>
        <end position="56"/>
    </location>
</feature>
<feature type="sequence conflict" description="In Ref. 5; AA sequence." evidence="13" ref="5">
    <original>YN</original>
    <variation>BT</variation>
    <location>
        <begin position="55"/>
        <end position="56"/>
    </location>
</feature>
<feature type="sequence conflict" description="In Ref. 3; AA sequence." evidence="13" ref="3">
    <location>
        <position position="55"/>
    </location>
</feature>
<feature type="sequence conflict" description="In Ref. 4; AA sequence." evidence="13" ref="4">
    <original>D</original>
    <variation>N</variation>
    <location>
        <position position="59"/>
    </location>
</feature>
<feature type="sequence conflict" description="In Ref. 2; Z00009." evidence="13" ref="2">
    <original>G</original>
    <variation>Q</variation>
    <location>
        <position position="66"/>
    </location>
</feature>
<feature type="sequence conflict" description="In Ref. 5; AA sequence." evidence="13" ref="5">
    <original>Q</original>
    <variation>E</variation>
    <location>
        <position position="70"/>
    </location>
</feature>
<feature type="sequence conflict" description="In Ref. 4; AA sequence." evidence="13" ref="4">
    <original>LG</original>
    <variation>AL</variation>
    <location>
        <begin position="75"/>
        <end position="76"/>
    </location>
</feature>
<feature type="sequence conflict" description="In Ref. 5; AA sequence." evidence="13" ref="5">
    <original>GSNRA</original>
    <variation>SSYRD</variation>
    <location>
        <begin position="76"/>
        <end position="80"/>
    </location>
</feature>
<feature type="sequence conflict" description="In Ref. 3; AA sequence." evidence="13" ref="3">
    <original>D</original>
    <variation>N</variation>
    <location>
        <position position="85"/>
    </location>
</feature>
<feature type="sequence conflict" description="In Ref. 5; AA sequence." evidence="13" ref="5">
    <original>G</original>
    <variation>D</variation>
    <location>
        <position position="89"/>
    </location>
</feature>
<feature type="sequence conflict" description="In Ref. 5; AA sequence." evidence="13" ref="5">
    <original>S</original>
    <variation>T</variation>
    <location>
        <position position="101"/>
    </location>
</feature>
<feature type="sequence conflict" description="In Ref. 5; AA sequence." evidence="13" ref="5">
    <original>E</original>
    <variation>Q</variation>
    <location>
        <position position="104"/>
    </location>
</feature>
<feature type="sequence conflict" description="In Ref. 2; Z00009." evidence="13" ref="2">
    <original>A</original>
    <variation>G</variation>
    <location>
        <position position="116"/>
    </location>
</feature>
<feature type="sequence conflict" description="In Ref. 5; AA sequence." evidence="13" ref="5">
    <original>LQT</original>
    <variation>TZS</variation>
    <location>
        <begin position="117"/>
        <end position="119"/>
    </location>
</feature>
<feature type="sequence conflict" description="In Ref. 4; AA sequence." evidence="13" ref="4">
    <original>T</original>
    <variation>A</variation>
    <location>
        <position position="119"/>
    </location>
</feature>
<feature type="non-terminal residue">
    <location>
        <position position="120"/>
    </location>
</feature>
<proteinExistence type="evidence at protein level"/>
<name>KVD28_HUMAN</name>
<accession>P01615</accession>
<accession>A0A0A0MTQ6</accession>
<accession>P01616</accession>
<accession>P01617</accession>
<accession>P06309</accession>
<protein>
    <recommendedName>
        <fullName evidence="7 12">Immunoglobulin kappa variable 2D-28</fullName>
    </recommendedName>
    <alternativeName>
        <fullName evidence="17">Ig kappa chain V-II region FR</fullName>
    </alternativeName>
    <alternativeName>
        <fullName evidence="16">Ig kappa chain V-II region GM607</fullName>
    </alternativeName>
    <alternativeName>
        <fullName evidence="18">Ig kappa chain V-II region MIL</fullName>
    </alternativeName>
    <alternativeName>
        <fullName evidence="14 15">Ig kappa chain V-II region TEW</fullName>
    </alternativeName>
</protein>
<evidence type="ECO:0000250" key="1">
    <source>
        <dbReference type="UniProtKB" id="P01602"/>
    </source>
</evidence>
<evidence type="ECO:0000255" key="2">
    <source>
        <dbReference type="PROSITE-ProRule" id="PRU00114"/>
    </source>
</evidence>
<evidence type="ECO:0000269" key="3">
    <source>
    </source>
</evidence>
<evidence type="ECO:0000269" key="4">
    <source>
    </source>
</evidence>
<evidence type="ECO:0000269" key="5">
    <source>
    </source>
</evidence>
<evidence type="ECO:0000269" key="6">
    <source ref="3"/>
</evidence>
<evidence type="ECO:0000303" key="7">
    <source>
    </source>
</evidence>
<evidence type="ECO:0000303" key="8">
    <source>
    </source>
</evidence>
<evidence type="ECO:0000303" key="9">
    <source>
    </source>
</evidence>
<evidence type="ECO:0000303" key="10">
    <source>
    </source>
</evidence>
<evidence type="ECO:0000303" key="11">
    <source>
    </source>
</evidence>
<evidence type="ECO:0000303" key="12">
    <source ref="8"/>
</evidence>
<evidence type="ECO:0000305" key="13"/>
<evidence type="ECO:0000305" key="14">
    <source>
    </source>
</evidence>
<evidence type="ECO:0000305" key="15">
    <source>
    </source>
</evidence>
<evidence type="ECO:0000305" key="16">
    <source>
    </source>
</evidence>
<evidence type="ECO:0000305" key="17">
    <source>
    </source>
</evidence>
<evidence type="ECO:0000305" key="18">
    <source ref="3"/>
</evidence>
<reference key="1">
    <citation type="journal article" date="2005" name="Nature">
        <title>Generation and annotation of the DNA sequences of human chromosomes 2 and 4.</title>
        <authorList>
            <person name="Hillier L.W."/>
            <person name="Graves T.A."/>
            <person name="Fulton R.S."/>
            <person name="Fulton L.A."/>
            <person name="Pepin K.H."/>
            <person name="Minx P."/>
            <person name="Wagner-McPherson C."/>
            <person name="Layman D."/>
            <person name="Wylie K."/>
            <person name="Sekhon M."/>
            <person name="Becker M.C."/>
            <person name="Fewell G.A."/>
            <person name="Delehaunty K.D."/>
            <person name="Miner T.L."/>
            <person name="Nash W.E."/>
            <person name="Kremitzki C."/>
            <person name="Oddy L."/>
            <person name="Du H."/>
            <person name="Sun H."/>
            <person name="Bradshaw-Cordum H."/>
            <person name="Ali J."/>
            <person name="Carter J."/>
            <person name="Cordes M."/>
            <person name="Harris A."/>
            <person name="Isak A."/>
            <person name="van Brunt A."/>
            <person name="Nguyen C."/>
            <person name="Du F."/>
            <person name="Courtney L."/>
            <person name="Kalicki J."/>
            <person name="Ozersky P."/>
            <person name="Abbott S."/>
            <person name="Armstrong J."/>
            <person name="Belter E.A."/>
            <person name="Caruso L."/>
            <person name="Cedroni M."/>
            <person name="Cotton M."/>
            <person name="Davidson T."/>
            <person name="Desai A."/>
            <person name="Elliott G."/>
            <person name="Erb T."/>
            <person name="Fronick C."/>
            <person name="Gaige T."/>
            <person name="Haakenson W."/>
            <person name="Haglund K."/>
            <person name="Holmes A."/>
            <person name="Harkins R."/>
            <person name="Kim K."/>
            <person name="Kruchowski S.S."/>
            <person name="Strong C.M."/>
            <person name="Grewal N."/>
            <person name="Goyea E."/>
            <person name="Hou S."/>
            <person name="Levy A."/>
            <person name="Martinka S."/>
            <person name="Mead K."/>
            <person name="McLellan M.D."/>
            <person name="Meyer R."/>
            <person name="Randall-Maher J."/>
            <person name="Tomlinson C."/>
            <person name="Dauphin-Kohlberg S."/>
            <person name="Kozlowicz-Reilly A."/>
            <person name="Shah N."/>
            <person name="Swearengen-Shahid S."/>
            <person name="Snider J."/>
            <person name="Strong J.T."/>
            <person name="Thompson J."/>
            <person name="Yoakum M."/>
            <person name="Leonard S."/>
            <person name="Pearman C."/>
            <person name="Trani L."/>
            <person name="Radionenko M."/>
            <person name="Waligorski J.E."/>
            <person name="Wang C."/>
            <person name="Rock S.M."/>
            <person name="Tin-Wollam A.-M."/>
            <person name="Maupin R."/>
            <person name="Latreille P."/>
            <person name="Wendl M.C."/>
            <person name="Yang S.-P."/>
            <person name="Pohl C."/>
            <person name="Wallis J.W."/>
            <person name="Spieth J."/>
            <person name="Bieri T.A."/>
            <person name="Berkowicz N."/>
            <person name="Nelson J.O."/>
            <person name="Osborne J."/>
            <person name="Ding L."/>
            <person name="Meyer R."/>
            <person name="Sabo A."/>
            <person name="Shotland Y."/>
            <person name="Sinha P."/>
            <person name="Wohldmann P.E."/>
            <person name="Cook L.L."/>
            <person name="Hickenbotham M.T."/>
            <person name="Eldred J."/>
            <person name="Williams D."/>
            <person name="Jones T.A."/>
            <person name="She X."/>
            <person name="Ciccarelli F.D."/>
            <person name="Izaurralde E."/>
            <person name="Taylor J."/>
            <person name="Schmutz J."/>
            <person name="Myers R.M."/>
            <person name="Cox D.R."/>
            <person name="Huang X."/>
            <person name="McPherson J.D."/>
            <person name="Mardis E.R."/>
            <person name="Clifton S.W."/>
            <person name="Warren W.C."/>
            <person name="Chinwalla A.T."/>
            <person name="Eddy S.R."/>
            <person name="Marra M.A."/>
            <person name="Ovcharenko I."/>
            <person name="Furey T.S."/>
            <person name="Miller W."/>
            <person name="Eichler E.E."/>
            <person name="Bork P."/>
            <person name="Suyama M."/>
            <person name="Torrents D."/>
            <person name="Waterston R.H."/>
            <person name="Wilson R.K."/>
        </authorList>
    </citation>
    <scope>NUCLEOTIDE SEQUENCE [LARGE SCALE GENOMIC DNA] (IMGT ALLELE IGKV2D-28*01)</scope>
</reference>
<reference key="2">
    <citation type="journal article" date="1984" name="Nature">
        <title>Contribution of human V kappa II germ-line genes to light-chain diversity.</title>
        <authorList>
            <person name="Klobeck H.G."/>
            <person name="Solomon A."/>
            <person name="Zachau H.G."/>
        </authorList>
    </citation>
    <scope>NUCLEOTIDE SEQUENCE [GENOMIC DNA] OF 17-120</scope>
</reference>
<reference key="3">
    <citation type="journal article" date="1967" name="Cold Spring Harb. Symp. Quant. Biol.">
        <title>The genetic, molecular, and cellular basis of antibody formation: some facts and a unifying hypothesis.</title>
        <authorList>
            <person name="Dreyer W.J."/>
            <person name="Gray W.R."/>
            <person name="Hood L.E."/>
        </authorList>
    </citation>
    <scope>PROTEIN SEQUENCE OF 21-120</scope>
</reference>
<reference key="4">
    <citation type="journal article" date="1973" name="Biochemistry">
        <title>Amino acid sequence of a kappa Bence Jones protein from a case of primary amyloidosis.</title>
        <authorList>
            <person name="Putnam F.W."/>
            <person name="Whitley E.J. Jr."/>
            <person name="Paul C."/>
            <person name="Davidson J.N."/>
        </authorList>
    </citation>
    <scope>PROTEIN SEQUENCE OF 21-120</scope>
</reference>
<reference key="5">
    <citation type="journal article" date="1976" name="Biochemistry">
        <title>Variable region sequence of the light chain from a Waldenstroms IgM with specificity for phosphorylcholine.</title>
        <authorList>
            <person name="Riesen W.F."/>
            <person name="Jaton J.-C."/>
        </authorList>
    </citation>
    <scope>PROTEIN SEQUENCE OF 21-120</scope>
</reference>
<reference key="6">
    <citation type="journal article" date="1973" name="J. Clin. Invest.">
        <title>Structural identity of Bence Jones and amyloid fibril proteins in a patient with plasma cell dyscrasia and amyloidosis.</title>
        <authorList>
            <person name="Terry W.D."/>
            <person name="Page D.L."/>
            <person name="Kimura S."/>
            <person name="Isobe T."/>
            <person name="Osserman E.F."/>
            <person name="Glenner G.G."/>
        </authorList>
    </citation>
    <scope>PROTEIN SEQUENCE OF 21-47</scope>
</reference>
<reference key="7">
    <citation type="journal article" date="2001" name="Exp. Clin. Immunogenet.">
        <title>Nomenclature of the human immunoglobulin kappa (IGK) genes.</title>
        <authorList>
            <person name="Lefranc M.P."/>
        </authorList>
    </citation>
    <scope>NOMEMCLATURE</scope>
</reference>
<reference key="8">
    <citation type="book" date="2001" name="The Immunoglobulin FactsBook.">
        <title>The Immunoglobulin FactsBook.</title>
        <editorList>
            <person name="Lefranc M.P."/>
            <person name="Lefranc G."/>
        </editorList>
        <authorList>
            <person name="Lefranc M.P."/>
            <person name="Lefranc G."/>
        </authorList>
    </citation>
    <scope>NOMENCLATURE</scope>
</reference>
<reference key="9">
    <citation type="journal article" date="2007" name="Annu. Rev. Genet.">
        <title>Immunoglobulin somatic hypermutation.</title>
        <authorList>
            <person name="Teng G."/>
            <person name="Papavasiliou F.N."/>
        </authorList>
    </citation>
    <scope>REVIEW ON SOMATIC HYPERMUTATION</scope>
</reference>
<reference key="10">
    <citation type="journal article" date="2010" name="J. Allergy Clin. Immunol.">
        <title>Structure and function of immunoglobulins.</title>
        <authorList>
            <person name="Schroeder H.W. Jr."/>
            <person name="Cavacini L."/>
        </authorList>
    </citation>
    <scope>REVIEW ON IMMUNOGLOBULINS</scope>
</reference>
<reference key="11">
    <citation type="journal article" date="2012" name="Nat. Rev. Immunol.">
        <title>Molecular programming of B cell memory.</title>
        <authorList>
            <person name="McHeyzer-Williams M."/>
            <person name="Okitsu S."/>
            <person name="Wang N."/>
            <person name="McHeyzer-Williams L."/>
        </authorList>
    </citation>
    <scope>REVIEW ON FUNCTION</scope>
</reference>
<reference key="12">
    <citation type="journal article" date="2014" name="Front. Immunol.">
        <title>Immunoglobulin and T Cell Receptor Genes: IMGT((R)) and the Birth and Rise of Immunoinformatics.</title>
        <authorList>
            <person name="Lefranc M.P."/>
        </authorList>
    </citation>
    <scope>NOMENCLATURE</scope>
</reference>
<comment type="function">
    <text evidence="8 9 10 11">V region of the variable domain of immunoglobulin light chains that participates in the antigen recognition (PubMed:24600447). Immunoglobulins, also known as antibodies, are membrane-bound or secreted glycoproteins produced by B lymphocytes. In the recognition phase of humoral immunity, the membrane-bound immunoglobulins serve as receptors which, upon binding of a specific antigen, trigger the clonal expansion and differentiation of B lymphocytes into immunoglobulins-secreting plasma cells. Secreted immunoglobulins mediate the effector phase of humoral immunity, which results in the elimination of bound antigens (PubMed:20176268, PubMed:22158414). The antigen binding site is formed by the variable domain of one heavy chain, together with that of its associated light chain. Thus, each immunoglobulin has two antigen binding sites with remarkable affinity for a particular antigen. The variable domains are assembled by a process called V-(D)-J rearrangement and can then be subjected to somatic hypermutations which, after exposure to antigen and selection, allow affinity maturation for a particular antigen (PubMed:17576170, PubMed:20176268).</text>
</comment>
<comment type="subunit">
    <text evidence="9">Immunoglobulins are composed of two identical heavy chains and two identical light chains; disulfide-linked.</text>
</comment>
<comment type="subcellular location">
    <subcellularLocation>
        <location evidence="9 10">Secreted</location>
    </subcellularLocation>
    <subcellularLocation>
        <location evidence="9 10">Cell membrane</location>
    </subcellularLocation>
</comment>
<comment type="polymorphism">
    <text>There are several alleles. The sequence shown is that of IMGT allele IGKV2D-28*01.</text>
</comment>
<comment type="caution">
    <text evidence="13">For an example of a full-length immunoglobulin kappa light chain see AC P0DOX7.</text>
</comment>
<dbReference type="EMBL" id="AC233264">
    <property type="status" value="NOT_ANNOTATED_CDS"/>
    <property type="molecule type" value="Genomic_DNA"/>
</dbReference>
<dbReference type="EMBL" id="Z00009">
    <property type="status" value="NOT_ANNOTATED_CDS"/>
    <property type="molecule type" value="Genomic_DNA"/>
</dbReference>
<dbReference type="PIR" id="A01886">
    <property type="entry name" value="K2HUFR"/>
</dbReference>
<dbReference type="PIR" id="A01887">
    <property type="entry name" value="K2HUML"/>
</dbReference>
<dbReference type="PIR" id="A01889">
    <property type="entry name" value="K2HUGM"/>
</dbReference>
<dbReference type="PIR" id="A90370">
    <property type="entry name" value="K2HUTW"/>
</dbReference>
<dbReference type="EMDB" id="EMD-13549"/>
<dbReference type="EMDB" id="EMD-27318"/>
<dbReference type="EMDB" id="EMD-32753"/>
<dbReference type="EMDB" id="EMD-41422"/>
<dbReference type="EMDB" id="EMD-41441"/>
<dbReference type="EMDB" id="EMD-60391"/>
<dbReference type="EMDB" id="EMD-60395"/>
<dbReference type="EMDB" id="EMD-60396"/>
<dbReference type="EMDB" id="EMD-60403"/>
<dbReference type="EMDB" id="EMD-9378"/>
<dbReference type="SMR" id="P01615"/>
<dbReference type="FunCoup" id="P01615">
    <property type="interactions" value="358"/>
</dbReference>
<dbReference type="IntAct" id="P01615">
    <property type="interactions" value="3"/>
</dbReference>
<dbReference type="DrugBank" id="DB08562">
    <property type="generic name" value="4-(4-STYRYL-PHENYLCARBAMOYL)-BUTYRIC ACID"/>
</dbReference>
<dbReference type="IMGT_GENE-DB" id="IGKV2D-28"/>
<dbReference type="GlyGen" id="P01615">
    <property type="glycosylation" value="1 site"/>
</dbReference>
<dbReference type="iPTMnet" id="P01615"/>
<dbReference type="PhosphoSitePlus" id="P01615"/>
<dbReference type="BioMuta" id="IGKV2D-28"/>
<dbReference type="DMDM" id="125786"/>
<dbReference type="jPOST" id="P01615"/>
<dbReference type="MassIVE" id="P01615"/>
<dbReference type="PRIDE" id="P01615"/>
<dbReference type="Ensembl" id="ENST00000453166.2">
    <property type="protein sequence ID" value="ENSP00000393492.2"/>
    <property type="gene ID" value="ENSG00000242534.3"/>
</dbReference>
<dbReference type="AGR" id="HGNC:5799"/>
<dbReference type="GeneCards" id="IGKV2D-28"/>
<dbReference type="HGNC" id="HGNC:5799">
    <property type="gene designation" value="IGKV2D-28"/>
</dbReference>
<dbReference type="HPA" id="ENSG00000242534">
    <property type="expression patterns" value="Tissue enhanced (esophagus, intestine, lymphoid tissue, salivary gland, stomach)"/>
</dbReference>
<dbReference type="neXtProt" id="NX_P01615"/>
<dbReference type="OpenTargets" id="ENSG00000244116"/>
<dbReference type="VEuPathDB" id="HostDB:ENSG00000242534"/>
<dbReference type="GeneTree" id="ENSGT00940000154039"/>
<dbReference type="InParanoid" id="P01615"/>
<dbReference type="OMA" id="WQGTHIP"/>
<dbReference type="OrthoDB" id="9519958at2759"/>
<dbReference type="PAN-GO" id="P01615">
    <property type="GO annotations" value="3 GO annotations based on evolutionary models"/>
</dbReference>
<dbReference type="PhylomeDB" id="P01615"/>
<dbReference type="PathwayCommons" id="P01615"/>
<dbReference type="Reactome" id="R-HSA-166663">
    <property type="pathway name" value="Initial triggering of complement"/>
</dbReference>
<dbReference type="Reactome" id="R-HSA-173623">
    <property type="pathway name" value="Classical antibody-mediated complement activation"/>
</dbReference>
<dbReference type="Reactome" id="R-HSA-198933">
    <property type="pathway name" value="Immunoregulatory interactions between a Lymphoid and a non-Lymphoid cell"/>
</dbReference>
<dbReference type="Reactome" id="R-HSA-202733">
    <property type="pathway name" value="Cell surface interactions at the vascular wall"/>
</dbReference>
<dbReference type="Reactome" id="R-HSA-2029481">
    <property type="pathway name" value="FCGR activation"/>
</dbReference>
<dbReference type="Reactome" id="R-HSA-2029482">
    <property type="pathway name" value="Regulation of actin dynamics for phagocytic cup formation"/>
</dbReference>
<dbReference type="Reactome" id="R-HSA-2029485">
    <property type="pathway name" value="Role of phospholipids in phagocytosis"/>
</dbReference>
<dbReference type="Reactome" id="R-HSA-2168880">
    <property type="pathway name" value="Scavenging of heme from plasma"/>
</dbReference>
<dbReference type="Reactome" id="R-HSA-2454202">
    <property type="pathway name" value="Fc epsilon receptor (FCERI) signaling"/>
</dbReference>
<dbReference type="Reactome" id="R-HSA-2730905">
    <property type="pathway name" value="Role of LAT2/NTAL/LAB on calcium mobilization"/>
</dbReference>
<dbReference type="Reactome" id="R-HSA-2871796">
    <property type="pathway name" value="FCERI mediated MAPK activation"/>
</dbReference>
<dbReference type="Reactome" id="R-HSA-2871809">
    <property type="pathway name" value="FCERI mediated Ca+2 mobilization"/>
</dbReference>
<dbReference type="Reactome" id="R-HSA-2871837">
    <property type="pathway name" value="FCERI mediated NF-kB activation"/>
</dbReference>
<dbReference type="Reactome" id="R-HSA-5690714">
    <property type="pathway name" value="CD22 mediated BCR regulation"/>
</dbReference>
<dbReference type="Reactome" id="R-HSA-9664323">
    <property type="pathway name" value="FCGR3A-mediated IL10 synthesis"/>
</dbReference>
<dbReference type="Reactome" id="R-HSA-9664422">
    <property type="pathway name" value="FCGR3A-mediated phagocytosis"/>
</dbReference>
<dbReference type="Reactome" id="R-HSA-9679191">
    <property type="pathway name" value="Potential therapeutics for SARS"/>
</dbReference>
<dbReference type="Reactome" id="R-HSA-977606">
    <property type="pathway name" value="Regulation of Complement cascade"/>
</dbReference>
<dbReference type="Reactome" id="R-HSA-983695">
    <property type="pathway name" value="Antigen activates B Cell Receptor (BCR) leading to generation of second messengers"/>
</dbReference>
<dbReference type="SignaLink" id="P01615"/>
<dbReference type="Pharos" id="P01615">
    <property type="development level" value="Tdark"/>
</dbReference>
<dbReference type="PRO" id="PR:P01615"/>
<dbReference type="Proteomes" id="UP000005640">
    <property type="component" value="Chromosome 2"/>
</dbReference>
<dbReference type="RNAct" id="P01615">
    <property type="molecule type" value="protein"/>
</dbReference>
<dbReference type="Bgee" id="ENSG00000242534">
    <property type="expression patterns" value="Expressed in duodenum and 89 other cell types or tissues"/>
</dbReference>
<dbReference type="GO" id="GO:0072562">
    <property type="term" value="C:blood microparticle"/>
    <property type="evidence" value="ECO:0007005"/>
    <property type="project" value="UniProtKB"/>
</dbReference>
<dbReference type="GO" id="GO:0070062">
    <property type="term" value="C:extracellular exosome"/>
    <property type="evidence" value="ECO:0007005"/>
    <property type="project" value="UniProtKB"/>
</dbReference>
<dbReference type="GO" id="GO:0005576">
    <property type="term" value="C:extracellular region"/>
    <property type="evidence" value="ECO:0000304"/>
    <property type="project" value="Reactome"/>
</dbReference>
<dbReference type="GO" id="GO:0019814">
    <property type="term" value="C:immunoglobulin complex"/>
    <property type="evidence" value="ECO:0000318"/>
    <property type="project" value="GO_Central"/>
</dbReference>
<dbReference type="GO" id="GO:0005886">
    <property type="term" value="C:plasma membrane"/>
    <property type="evidence" value="ECO:0000304"/>
    <property type="project" value="Reactome"/>
</dbReference>
<dbReference type="GO" id="GO:0003823">
    <property type="term" value="F:antigen binding"/>
    <property type="evidence" value="ECO:0000303"/>
    <property type="project" value="UniProtKB"/>
</dbReference>
<dbReference type="GO" id="GO:0002250">
    <property type="term" value="P:adaptive immune response"/>
    <property type="evidence" value="ECO:0007669"/>
    <property type="project" value="UniProtKB-KW"/>
</dbReference>
<dbReference type="GO" id="GO:0006955">
    <property type="term" value="P:immune response"/>
    <property type="evidence" value="ECO:0000318"/>
    <property type="project" value="GO_Central"/>
</dbReference>
<dbReference type="FunFam" id="2.60.40.10:FF:000365">
    <property type="entry name" value="If kappa light chain"/>
    <property type="match status" value="1"/>
</dbReference>
<dbReference type="Gene3D" id="2.60.40.10">
    <property type="entry name" value="Immunoglobulins"/>
    <property type="match status" value="1"/>
</dbReference>
<dbReference type="InterPro" id="IPR007110">
    <property type="entry name" value="Ig-like_dom"/>
</dbReference>
<dbReference type="InterPro" id="IPR036179">
    <property type="entry name" value="Ig-like_dom_sf"/>
</dbReference>
<dbReference type="InterPro" id="IPR013783">
    <property type="entry name" value="Ig-like_fold"/>
</dbReference>
<dbReference type="InterPro" id="IPR013106">
    <property type="entry name" value="Ig_V-set"/>
</dbReference>
<dbReference type="InterPro" id="IPR050150">
    <property type="entry name" value="IgV_Light_Chain"/>
</dbReference>
<dbReference type="PANTHER" id="PTHR23267">
    <property type="entry name" value="IMMUNOGLOBULIN LIGHT CHAIN"/>
    <property type="match status" value="1"/>
</dbReference>
<dbReference type="Pfam" id="PF07686">
    <property type="entry name" value="V-set"/>
    <property type="match status" value="1"/>
</dbReference>
<dbReference type="SMART" id="SM00406">
    <property type="entry name" value="IGv"/>
    <property type="match status" value="1"/>
</dbReference>
<dbReference type="SUPFAM" id="SSF48726">
    <property type="entry name" value="Immunoglobulin"/>
    <property type="match status" value="1"/>
</dbReference>
<dbReference type="PROSITE" id="PS50835">
    <property type="entry name" value="IG_LIKE"/>
    <property type="match status" value="1"/>
</dbReference>
<sequence length="120" mass="12957">MRLPAQLLGLLMLWVSGSSGDIVMTQSPLSLPVTPGEPASISCRSSQSLLHSNGYNYLDWYLQKPGQSPQLLIYLGSNRASGVPDRFSGSGSGTDFTLKISRVEAEDVGVYYCMQALQTP</sequence>
<gene>
    <name evidence="7 12" type="primary">IGKV2D-28</name>
</gene>
<keyword id="KW-1064">Adaptive immunity</keyword>
<keyword id="KW-1003">Cell membrane</keyword>
<keyword id="KW-0903">Direct protein sequencing</keyword>
<keyword id="KW-1015">Disulfide bond</keyword>
<keyword id="KW-0391">Immunity</keyword>
<keyword id="KW-1280">Immunoglobulin</keyword>
<keyword id="KW-0393">Immunoglobulin domain</keyword>
<keyword id="KW-0472">Membrane</keyword>
<keyword id="KW-1185">Reference proteome</keyword>
<keyword id="KW-0964">Secreted</keyword>
<keyword id="KW-0732">Signal</keyword>
<organism>
    <name type="scientific">Homo sapiens</name>
    <name type="common">Human</name>
    <dbReference type="NCBI Taxonomy" id="9606"/>
    <lineage>
        <taxon>Eukaryota</taxon>
        <taxon>Metazoa</taxon>
        <taxon>Chordata</taxon>
        <taxon>Craniata</taxon>
        <taxon>Vertebrata</taxon>
        <taxon>Euteleostomi</taxon>
        <taxon>Mammalia</taxon>
        <taxon>Eutheria</taxon>
        <taxon>Euarchontoglires</taxon>
        <taxon>Primates</taxon>
        <taxon>Haplorrhini</taxon>
        <taxon>Catarrhini</taxon>
        <taxon>Hominidae</taxon>
        <taxon>Homo</taxon>
    </lineage>
</organism>